<protein>
    <recommendedName>
        <fullName>Sodium/potassium-transporting ATPase subunit beta-1</fullName>
    </recommendedName>
    <alternativeName>
        <fullName>Sodium/potassium-dependent ATPase subunit beta-1</fullName>
    </alternativeName>
</protein>
<accession>P51165</accession>
<keyword id="KW-1003">Cell membrane</keyword>
<keyword id="KW-1015">Disulfide bond</keyword>
<keyword id="KW-0325">Glycoprotein</keyword>
<keyword id="KW-0406">Ion transport</keyword>
<keyword id="KW-0472">Membrane</keyword>
<keyword id="KW-0630">Potassium</keyword>
<keyword id="KW-0633">Potassium transport</keyword>
<keyword id="KW-0735">Signal-anchor</keyword>
<keyword id="KW-0915">Sodium</keyword>
<keyword id="KW-0739">Sodium transport</keyword>
<keyword id="KW-0740">Sodium/potassium transport</keyword>
<keyword id="KW-0812">Transmembrane</keyword>
<keyword id="KW-1133">Transmembrane helix</keyword>
<keyword id="KW-0813">Transport</keyword>
<organism>
    <name type="scientific">Anguilla anguilla</name>
    <name type="common">European freshwater eel</name>
    <name type="synonym">Muraena anguilla</name>
    <dbReference type="NCBI Taxonomy" id="7936"/>
    <lineage>
        <taxon>Eukaryota</taxon>
        <taxon>Metazoa</taxon>
        <taxon>Chordata</taxon>
        <taxon>Craniata</taxon>
        <taxon>Vertebrata</taxon>
        <taxon>Euteleostomi</taxon>
        <taxon>Actinopterygii</taxon>
        <taxon>Neopterygii</taxon>
        <taxon>Teleostei</taxon>
        <taxon>Anguilliformes</taxon>
        <taxon>Anguillidae</taxon>
        <taxon>Anguilla</taxon>
    </lineage>
</organism>
<name>AT1B1_ANGAN</name>
<proteinExistence type="evidence at transcript level"/>
<sequence length="303" mass="34901">MPAATKDSDGGWKKFLWNSEKKEFLGRTGGSWAKILLFYVIFYGCLAGIFIGTIQALLLTINDFKPVYQDRVAPPGLSHTPRSEKSEMSFKVGDPSTYQKYVKAMHDFLQAYNDSKQENMMKYEDCGDTPKSYINRGELDNNQGIKKACIFRRSWLDKCSGLEDPTFGFSEGKPCLIVKLNRIVNFRPRPPTSNDSIPEEAQSKVQPDVIPIYCTNKREEDAAKVREIKYYGIQEGFPLQYYPYYGKQLHPQYLQPLVAVHFTNLTMATELRIECRVYGQNIAYSDKDRYRGRFDVKFTINES</sequence>
<gene>
    <name type="primary">atp1b1</name>
</gene>
<reference key="1">
    <citation type="journal article" date="1995" name="Comp. Biochem. Physiol.">
        <title>Primary sequence, tissue specificity and expression of the Na+,K(+)-ATPase alpha 1 subunit in the European eel (Anguilla anguilla).</title>
        <authorList>
            <person name="Cutler C."/>
            <person name="Sanders I.L."/>
            <person name="Hazon N."/>
            <person name="Cramb G."/>
        </authorList>
    </citation>
    <scope>NUCLEOTIDE SEQUENCE [MRNA]</scope>
    <source>
        <tissue>Gill</tissue>
    </source>
</reference>
<reference key="2">
    <citation type="journal article" date="1995" name="Fish Physiol. Biochem.">
        <title>Primary sequence, tissue specificity and expression of the Na+,K(+)-ATPase beta 1 subunit in the European eel (Anguilla anguilla).</title>
        <authorList>
            <person name="Cutler C."/>
            <person name="Sanders I.L."/>
            <person name="Hazon N."/>
            <person name="Cramb G."/>
        </authorList>
    </citation>
    <scope>NUCLEOTIDE SEQUENCE [MRNA]</scope>
    <scope>TISSUE SPECIFICITY</scope>
    <source>
        <tissue>Gill</tissue>
    </source>
</reference>
<evidence type="ECO:0000250" key="1"/>
<evidence type="ECO:0000255" key="2"/>
<evidence type="ECO:0000269" key="3">
    <source ref="2"/>
</evidence>
<evidence type="ECO:0000305" key="4"/>
<feature type="chain" id="PRO_0000219114" description="Sodium/potassium-transporting ATPase subunit beta-1">
    <location>
        <begin position="1"/>
        <end position="303"/>
    </location>
</feature>
<feature type="topological domain" description="Cytoplasmic" evidence="2">
    <location>
        <begin position="1"/>
        <end position="34"/>
    </location>
</feature>
<feature type="transmembrane region" description="Helical; Signal-anchor for type II membrane protein" evidence="2">
    <location>
        <begin position="35"/>
        <end position="55"/>
    </location>
</feature>
<feature type="topological domain" description="Extracellular" evidence="2">
    <location>
        <begin position="56"/>
        <end position="303"/>
    </location>
</feature>
<feature type="glycosylation site" description="N-linked (GlcNAc...) asparagine" evidence="2">
    <location>
        <position position="113"/>
    </location>
</feature>
<feature type="glycosylation site" description="N-linked (GlcNAc...) asparagine" evidence="2">
    <location>
        <position position="194"/>
    </location>
</feature>
<feature type="glycosylation site" description="N-linked (GlcNAc...) asparagine" evidence="2">
    <location>
        <position position="264"/>
    </location>
</feature>
<feature type="disulfide bond" evidence="1">
    <location>
        <begin position="126"/>
        <end position="149"/>
    </location>
</feature>
<feature type="disulfide bond" evidence="1">
    <location>
        <begin position="159"/>
        <end position="175"/>
    </location>
</feature>
<feature type="disulfide bond" evidence="1">
    <location>
        <begin position="214"/>
        <end position="275"/>
    </location>
</feature>
<comment type="function">
    <text>This is the non-catalytic component of the active enzyme, which catalyzes the hydrolysis of ATP coupled with the exchange of Na(+) and K(+) ions across the plasma membrane. The beta subunit regulates, through assembly of alpha/beta heterodimers, the number of sodium pumps transported to the plasma membrane.</text>
</comment>
<comment type="subunit">
    <text evidence="4">The sodium/potassium-transporting ATPase is composed of a catalytic alpha subunit, an auxiliary non-catalytic beta subunit and an additional regulatory subunit.</text>
</comment>
<comment type="subcellular location">
    <subcellularLocation>
        <location evidence="4">Cell membrane</location>
        <topology>Single-pass type II membrane protein</topology>
    </subcellularLocation>
</comment>
<comment type="tissue specificity">
    <text evidence="3">Detected in all tissues except liver and cardiac muscle. Highest levels found in intestine, ovary and kidney with marginally lower levels in brain, spleen, esophagus, eye and pancreas, intermediate levels in gill and low levels in white and red skeletal muscle.</text>
</comment>
<comment type="similarity">
    <text evidence="4">Belongs to the X(+)/potassium ATPases subunit beta family.</text>
</comment>
<dbReference type="EMBL" id="X76109">
    <property type="protein sequence ID" value="CAA53715.1"/>
    <property type="molecule type" value="mRNA"/>
</dbReference>
<dbReference type="PIR" id="S45093">
    <property type="entry name" value="S45093"/>
</dbReference>
<dbReference type="SMR" id="P51165"/>
<dbReference type="GlyCosmos" id="P51165">
    <property type="glycosylation" value="3 sites, No reported glycans"/>
</dbReference>
<dbReference type="OMA" id="TAYDKNY"/>
<dbReference type="OrthoDB" id="5912413at2759"/>
<dbReference type="GO" id="GO:0005890">
    <property type="term" value="C:sodium:potassium-exchanging ATPase complex"/>
    <property type="evidence" value="ECO:0007669"/>
    <property type="project" value="InterPro"/>
</dbReference>
<dbReference type="GO" id="GO:0001671">
    <property type="term" value="F:ATPase activator activity"/>
    <property type="evidence" value="ECO:0007669"/>
    <property type="project" value="TreeGrafter"/>
</dbReference>
<dbReference type="GO" id="GO:0030007">
    <property type="term" value="P:intracellular potassium ion homeostasis"/>
    <property type="evidence" value="ECO:0007669"/>
    <property type="project" value="TreeGrafter"/>
</dbReference>
<dbReference type="GO" id="GO:0006883">
    <property type="term" value="P:intracellular sodium ion homeostasis"/>
    <property type="evidence" value="ECO:0007669"/>
    <property type="project" value="TreeGrafter"/>
</dbReference>
<dbReference type="GO" id="GO:1990573">
    <property type="term" value="P:potassium ion import across plasma membrane"/>
    <property type="evidence" value="ECO:0007669"/>
    <property type="project" value="TreeGrafter"/>
</dbReference>
<dbReference type="GO" id="GO:0036376">
    <property type="term" value="P:sodium ion export across plasma membrane"/>
    <property type="evidence" value="ECO:0007669"/>
    <property type="project" value="TreeGrafter"/>
</dbReference>
<dbReference type="FunFam" id="1.20.5.170:FF:000062">
    <property type="entry name" value="Sodium/potassium-transporting ATPase subunit beta"/>
    <property type="match status" value="1"/>
</dbReference>
<dbReference type="Gene3D" id="2.60.40.1660">
    <property type="entry name" value="Na, k-atpase alpha subunit"/>
    <property type="match status" value="1"/>
</dbReference>
<dbReference type="InterPro" id="IPR000402">
    <property type="entry name" value="Na/K_ATPase_sub_beta"/>
</dbReference>
<dbReference type="InterPro" id="IPR038702">
    <property type="entry name" value="Na/K_ATPase_sub_beta_sf"/>
</dbReference>
<dbReference type="NCBIfam" id="TIGR01107">
    <property type="entry name" value="Na_K_ATPase_bet"/>
    <property type="match status" value="1"/>
</dbReference>
<dbReference type="PANTHER" id="PTHR11523">
    <property type="entry name" value="SODIUM/POTASSIUM-DEPENDENT ATPASE BETA SUBUNIT"/>
    <property type="match status" value="1"/>
</dbReference>
<dbReference type="PANTHER" id="PTHR11523:SF10">
    <property type="entry name" value="SODIUM_POTASSIUM-TRANSPORTING ATPASE SUBUNIT BETA-1"/>
    <property type="match status" value="1"/>
</dbReference>
<dbReference type="Pfam" id="PF00287">
    <property type="entry name" value="Na_K-ATPase"/>
    <property type="match status" value="1"/>
</dbReference>
<dbReference type="PROSITE" id="PS00390">
    <property type="entry name" value="ATPASE_NA_K_BETA_1"/>
    <property type="match status" value="1"/>
</dbReference>
<dbReference type="PROSITE" id="PS00391">
    <property type="entry name" value="ATPASE_NA_K_BETA_2"/>
    <property type="match status" value="1"/>
</dbReference>